<feature type="chain" id="PRO_0000337020" description="TBC1 domain family member 28">
    <location>
        <begin position="1"/>
        <end position="210"/>
    </location>
</feature>
<feature type="domain" description="Rab-GAP TBC">
    <location>
        <begin position="101"/>
        <end position="210"/>
    </location>
</feature>
<feature type="sequence conflict" description="In Ref. 1; AAI12013." evidence="1" ref="1">
    <original>E</original>
    <variation>A</variation>
    <location>
        <position position="56"/>
    </location>
</feature>
<organism>
    <name type="scientific">Homo sapiens</name>
    <name type="common">Human</name>
    <dbReference type="NCBI Taxonomy" id="9606"/>
    <lineage>
        <taxon>Eukaryota</taxon>
        <taxon>Metazoa</taxon>
        <taxon>Chordata</taxon>
        <taxon>Craniata</taxon>
        <taxon>Vertebrata</taxon>
        <taxon>Euteleostomi</taxon>
        <taxon>Mammalia</taxon>
        <taxon>Eutheria</taxon>
        <taxon>Euarchontoglires</taxon>
        <taxon>Primates</taxon>
        <taxon>Haplorrhini</taxon>
        <taxon>Catarrhini</taxon>
        <taxon>Hominidae</taxon>
        <taxon>Homo</taxon>
    </lineage>
</organism>
<gene>
    <name type="primary">TBC1D28</name>
</gene>
<name>TBC28_HUMAN</name>
<keyword id="KW-1185">Reference proteome</keyword>
<protein>
    <recommendedName>
        <fullName>TBC1 domain family member 28</fullName>
    </recommendedName>
</protein>
<proteinExistence type="evidence at transcript level"/>
<accession>Q2M2D7</accession>
<accession>Q2M2E1</accession>
<sequence length="210" mass="24072">MEMDEDPDNLPAQGQGNIIITKYEQGHRAGAAVDLGHEQVDVRKYTNNLGIVHEMELPRVSALEVKQRRKESKRTNKWQKMLADWTKYRSTKKLSQRVCKVIPLAVRGRALSLLLDIDKIKSQNPGKYKVMKEKGKRSSRIIHCIQLDVSHTLQKHMMFIQRFGVKQQELCDILVAYSAYNPVSIPGQRYSWYLCPYSQAWVSLGGVATS</sequence>
<dbReference type="EMBL" id="BC112012">
    <property type="protein sequence ID" value="AAI12013.1"/>
    <property type="molecule type" value="mRNA"/>
</dbReference>
<dbReference type="EMBL" id="BC112016">
    <property type="protein sequence ID" value="AAI12017.1"/>
    <property type="molecule type" value="mRNA"/>
</dbReference>
<dbReference type="CCDS" id="CCDS42273.1"/>
<dbReference type="RefSeq" id="NP_001034486.2">
    <property type="nucleotide sequence ID" value="NM_001039397.3"/>
</dbReference>
<dbReference type="SMR" id="Q2M2D7"/>
<dbReference type="BioGRID" id="129028">
    <property type="interactions" value="6"/>
</dbReference>
<dbReference type="IntAct" id="Q2M2D7">
    <property type="interactions" value="5"/>
</dbReference>
<dbReference type="STRING" id="9606.ENSP00000339973"/>
<dbReference type="iPTMnet" id="Q2M2D7"/>
<dbReference type="PhosphoSitePlus" id="Q2M2D7"/>
<dbReference type="BioMuta" id="TBC1D28"/>
<dbReference type="DMDM" id="121941423"/>
<dbReference type="MassIVE" id="Q2M2D7"/>
<dbReference type="PaxDb" id="9606-ENSP00000339973"/>
<dbReference type="Antibodypedia" id="63424">
    <property type="antibodies" value="99 antibodies from 12 providers"/>
</dbReference>
<dbReference type="DNASU" id="254272"/>
<dbReference type="Ensembl" id="ENST00000345096.8">
    <property type="protein sequence ID" value="ENSP00000339973.4"/>
    <property type="gene ID" value="ENSG00000189375.12"/>
</dbReference>
<dbReference type="Ensembl" id="ENST00000405044.7">
    <property type="protein sequence ID" value="ENSP00000385821.1"/>
    <property type="gene ID" value="ENSG00000189375.12"/>
</dbReference>
<dbReference type="GeneID" id="254272"/>
<dbReference type="KEGG" id="hsa:254272"/>
<dbReference type="MANE-Select" id="ENST00000405044.7">
    <property type="protein sequence ID" value="ENSP00000385821.1"/>
    <property type="RefSeq nucleotide sequence ID" value="NM_001039397.3"/>
    <property type="RefSeq protein sequence ID" value="NP_001034486.2"/>
</dbReference>
<dbReference type="UCSC" id="uc002gud.2">
    <property type="organism name" value="human"/>
</dbReference>
<dbReference type="AGR" id="HGNC:26858"/>
<dbReference type="CTD" id="254272"/>
<dbReference type="GeneCards" id="TBC1D28"/>
<dbReference type="HGNC" id="HGNC:26858">
    <property type="gene designation" value="TBC1D28"/>
</dbReference>
<dbReference type="HPA" id="ENSG00000189375">
    <property type="expression patterns" value="Tissue enriched (testis)"/>
</dbReference>
<dbReference type="neXtProt" id="NX_Q2M2D7"/>
<dbReference type="PharmGKB" id="PA162405287"/>
<dbReference type="VEuPathDB" id="HostDB:ENSG00000189375"/>
<dbReference type="eggNOG" id="KOG1102">
    <property type="taxonomic scope" value="Eukaryota"/>
</dbReference>
<dbReference type="GeneTree" id="ENSGT00940000162039"/>
<dbReference type="HOGENOM" id="CLU_005350_9_2_1"/>
<dbReference type="InParanoid" id="Q2M2D7"/>
<dbReference type="OMA" id="ERYGANQ"/>
<dbReference type="OrthoDB" id="9540045at2759"/>
<dbReference type="PAN-GO" id="Q2M2D7">
    <property type="GO annotations" value="2 GO annotations based on evolutionary models"/>
</dbReference>
<dbReference type="PhylomeDB" id="Q2M2D7"/>
<dbReference type="TreeFam" id="TF343904"/>
<dbReference type="PathwayCommons" id="Q2M2D7"/>
<dbReference type="SignaLink" id="Q2M2D7"/>
<dbReference type="BioGRID-ORCS" id="254272">
    <property type="hits" value="55 hits in 1102 CRISPR screens"/>
</dbReference>
<dbReference type="ChiTaRS" id="TBC1D28">
    <property type="organism name" value="human"/>
</dbReference>
<dbReference type="GenomeRNAi" id="254272"/>
<dbReference type="Pharos" id="Q2M2D7">
    <property type="development level" value="Tdark"/>
</dbReference>
<dbReference type="PRO" id="PR:Q2M2D7"/>
<dbReference type="Proteomes" id="UP000005640">
    <property type="component" value="Chromosome 17"/>
</dbReference>
<dbReference type="RNAct" id="Q2M2D7">
    <property type="molecule type" value="protein"/>
</dbReference>
<dbReference type="Bgee" id="ENSG00000189375">
    <property type="expression patterns" value="Expressed in sperm and 37 other cell types or tissues"/>
</dbReference>
<dbReference type="ExpressionAtlas" id="Q2M2D7">
    <property type="expression patterns" value="baseline and differential"/>
</dbReference>
<dbReference type="Gene3D" id="1.10.8.270">
    <property type="entry name" value="putative rabgap domain of human tbc1 domain family member 14 like domains"/>
    <property type="match status" value="1"/>
</dbReference>
<dbReference type="InterPro" id="IPR000195">
    <property type="entry name" value="Rab-GAP-TBC_dom"/>
</dbReference>
<dbReference type="InterPro" id="IPR035969">
    <property type="entry name" value="Rab-GAP_TBC_sf"/>
</dbReference>
<dbReference type="InterPro" id="IPR050302">
    <property type="entry name" value="Rab_GAP_TBC_domain"/>
</dbReference>
<dbReference type="PANTHER" id="PTHR47219">
    <property type="entry name" value="RAB GTPASE-ACTIVATING PROTEIN 1-LIKE"/>
    <property type="match status" value="1"/>
</dbReference>
<dbReference type="PANTHER" id="PTHR47219:SF25">
    <property type="entry name" value="RAB-GAP TBC DOMAIN-CONTAINING PROTEIN"/>
    <property type="match status" value="1"/>
</dbReference>
<dbReference type="Pfam" id="PF00566">
    <property type="entry name" value="RabGAP-TBC"/>
    <property type="match status" value="1"/>
</dbReference>
<dbReference type="SUPFAM" id="SSF47923">
    <property type="entry name" value="Ypt/Rab-GAP domain of gyp1p"/>
    <property type="match status" value="1"/>
</dbReference>
<reference key="1">
    <citation type="journal article" date="2004" name="Genome Res.">
        <title>The status, quality, and expansion of the NIH full-length cDNA project: the Mammalian Gene Collection (MGC).</title>
        <authorList>
            <consortium name="The MGC Project Team"/>
        </authorList>
    </citation>
    <scope>NUCLEOTIDE SEQUENCE [LARGE SCALE MRNA]</scope>
</reference>
<comment type="caution">
    <text evidence="1">The Rab-GAP TBC domain is short and lacks the C-terminal part. It is therefore unclear whether the protein has GTPase-activating activity.</text>
</comment>
<evidence type="ECO:0000305" key="1"/>